<reference key="1">
    <citation type="journal article" date="2006" name="Genome Res.">
        <title>Skewed genomic variability in strains of the toxigenic bacterial pathogen, Clostridium perfringens.</title>
        <authorList>
            <person name="Myers G.S.A."/>
            <person name="Rasko D.A."/>
            <person name="Cheung J.K."/>
            <person name="Ravel J."/>
            <person name="Seshadri R."/>
            <person name="DeBoy R.T."/>
            <person name="Ren Q."/>
            <person name="Varga J."/>
            <person name="Awad M.M."/>
            <person name="Brinkac L.M."/>
            <person name="Daugherty S.C."/>
            <person name="Haft D.H."/>
            <person name="Dodson R.J."/>
            <person name="Madupu R."/>
            <person name="Nelson W.C."/>
            <person name="Rosovitz M.J."/>
            <person name="Sullivan S.A."/>
            <person name="Khouri H."/>
            <person name="Dimitrov G.I."/>
            <person name="Watkins K.L."/>
            <person name="Mulligan S."/>
            <person name="Benton J."/>
            <person name="Radune D."/>
            <person name="Fisher D.J."/>
            <person name="Atkins H.S."/>
            <person name="Hiscox T."/>
            <person name="Jost B.H."/>
            <person name="Billington S.J."/>
            <person name="Songer J.G."/>
            <person name="McClane B.A."/>
            <person name="Titball R.W."/>
            <person name="Rood J.I."/>
            <person name="Melville S.B."/>
            <person name="Paulsen I.T."/>
        </authorList>
    </citation>
    <scope>NUCLEOTIDE SEQUENCE [LARGE SCALE GENOMIC DNA]</scope>
    <source>
        <strain>SM101 / Type A</strain>
    </source>
</reference>
<keyword id="KW-0963">Cytoplasm</keyword>
<protein>
    <recommendedName>
        <fullName evidence="1">UPF0291 protein CPR_1073</fullName>
    </recommendedName>
</protein>
<gene>
    <name type="ordered locus">CPR_1073</name>
</gene>
<evidence type="ECO:0000255" key="1">
    <source>
        <dbReference type="HAMAP-Rule" id="MF_01103"/>
    </source>
</evidence>
<evidence type="ECO:0000256" key="2">
    <source>
        <dbReference type="SAM" id="MobiDB-lite"/>
    </source>
</evidence>
<comment type="subcellular location">
    <subcellularLocation>
        <location evidence="1">Cytoplasm</location>
    </subcellularLocation>
</comment>
<comment type="similarity">
    <text evidence="1">Belongs to the UPF0291 family.</text>
</comment>
<accession>Q0SU12</accession>
<name>Y1073_CLOPS</name>
<organism>
    <name type="scientific">Clostridium perfringens (strain SM101 / Type A)</name>
    <dbReference type="NCBI Taxonomy" id="289380"/>
    <lineage>
        <taxon>Bacteria</taxon>
        <taxon>Bacillati</taxon>
        <taxon>Bacillota</taxon>
        <taxon>Clostridia</taxon>
        <taxon>Eubacteriales</taxon>
        <taxon>Clostridiaceae</taxon>
        <taxon>Clostridium</taxon>
    </lineage>
</organism>
<feature type="chain" id="PRO_1000065025" description="UPF0291 protein CPR_1073">
    <location>
        <begin position="1"/>
        <end position="59"/>
    </location>
</feature>
<feature type="region of interest" description="Disordered" evidence="2">
    <location>
        <begin position="1"/>
        <end position="30"/>
    </location>
</feature>
<proteinExistence type="inferred from homology"/>
<dbReference type="EMBL" id="CP000312">
    <property type="protein sequence ID" value="ABG87690.1"/>
    <property type="molecule type" value="Genomic_DNA"/>
</dbReference>
<dbReference type="RefSeq" id="WP_003448677.1">
    <property type="nucleotide sequence ID" value="NZ_CAXVKH010000027.1"/>
</dbReference>
<dbReference type="SMR" id="Q0SU12"/>
<dbReference type="KEGG" id="cpr:CPR_1073"/>
<dbReference type="BioCyc" id="CPER289380:GI76-1089-MONOMER"/>
<dbReference type="Proteomes" id="UP000001824">
    <property type="component" value="Chromosome"/>
</dbReference>
<dbReference type="GO" id="GO:0005737">
    <property type="term" value="C:cytoplasm"/>
    <property type="evidence" value="ECO:0007669"/>
    <property type="project" value="UniProtKB-SubCell"/>
</dbReference>
<dbReference type="Gene3D" id="1.10.287.540">
    <property type="entry name" value="Helix hairpin bin"/>
    <property type="match status" value="1"/>
</dbReference>
<dbReference type="HAMAP" id="MF_01103">
    <property type="entry name" value="UPF0291"/>
    <property type="match status" value="1"/>
</dbReference>
<dbReference type="InterPro" id="IPR009242">
    <property type="entry name" value="DUF896"/>
</dbReference>
<dbReference type="PANTHER" id="PTHR37300">
    <property type="entry name" value="UPF0291 PROTEIN CBO2609/CLC_2481"/>
    <property type="match status" value="1"/>
</dbReference>
<dbReference type="PANTHER" id="PTHR37300:SF1">
    <property type="entry name" value="UPF0291 PROTEIN YNZC"/>
    <property type="match status" value="1"/>
</dbReference>
<dbReference type="Pfam" id="PF05979">
    <property type="entry name" value="DUF896"/>
    <property type="match status" value="1"/>
</dbReference>
<dbReference type="SUPFAM" id="SSF158221">
    <property type="entry name" value="YnzC-like"/>
    <property type="match status" value="1"/>
</dbReference>
<sequence>MNIDELTKRINELHKKHKEEGLSEDEHKEREELRKEYINRFKSNLREQLKGIEPKNKKN</sequence>